<organism>
    <name type="scientific">Thermococcus gammatolerans (strain DSM 15229 / JCM 11827 / EJ3)</name>
    <dbReference type="NCBI Taxonomy" id="593117"/>
    <lineage>
        <taxon>Archaea</taxon>
        <taxon>Methanobacteriati</taxon>
        <taxon>Methanobacteriota</taxon>
        <taxon>Thermococci</taxon>
        <taxon>Thermococcales</taxon>
        <taxon>Thermococcaceae</taxon>
        <taxon>Thermococcus</taxon>
    </lineage>
</organism>
<accession>C5A2F3</accession>
<protein>
    <recommendedName>
        <fullName evidence="1">Probable ribonuclease FAU-1</fullName>
        <ecNumber evidence="1">3.1.26.-</ecNumber>
    </recommendedName>
    <alternativeName>
        <fullName evidence="1">RNA-binding protein FAU-1</fullName>
    </alternativeName>
</protein>
<dbReference type="EC" id="3.1.26.-" evidence="1"/>
<dbReference type="EMBL" id="CP001398">
    <property type="protein sequence ID" value="ACS34572.1"/>
    <property type="molecule type" value="Genomic_DNA"/>
</dbReference>
<dbReference type="RefSeq" id="WP_015859675.1">
    <property type="nucleotide sequence ID" value="NC_012804.1"/>
</dbReference>
<dbReference type="SMR" id="C5A2F3"/>
<dbReference type="STRING" id="593117.TGAM_2070"/>
<dbReference type="PaxDb" id="593117-TGAM_2070"/>
<dbReference type="GeneID" id="7988636"/>
<dbReference type="KEGG" id="tga:TGAM_2070"/>
<dbReference type="PATRIC" id="fig|593117.10.peg.2079"/>
<dbReference type="eggNOG" id="arCOG04307">
    <property type="taxonomic scope" value="Archaea"/>
</dbReference>
<dbReference type="HOGENOM" id="CLU_044303_0_0_2"/>
<dbReference type="OrthoDB" id="84798at2157"/>
<dbReference type="Proteomes" id="UP000001488">
    <property type="component" value="Chromosome"/>
</dbReference>
<dbReference type="GO" id="GO:0035925">
    <property type="term" value="F:mRNA 3'-UTR AU-rich region binding"/>
    <property type="evidence" value="ECO:0007669"/>
    <property type="project" value="UniProtKB-UniRule"/>
</dbReference>
<dbReference type="GO" id="GO:0016891">
    <property type="term" value="F:RNA endonuclease activity, producing 5'-phosphomonoesters"/>
    <property type="evidence" value="ECO:0007669"/>
    <property type="project" value="UniProtKB-UniRule"/>
</dbReference>
<dbReference type="GO" id="GO:0006364">
    <property type="term" value="P:rRNA processing"/>
    <property type="evidence" value="ECO:0007669"/>
    <property type="project" value="UniProtKB-UniRule"/>
</dbReference>
<dbReference type="Gene3D" id="2.40.380.10">
    <property type="entry name" value="FomD-like"/>
    <property type="match status" value="1"/>
</dbReference>
<dbReference type="HAMAP" id="MF_01910">
    <property type="entry name" value="RNA_binding_AU_1"/>
    <property type="match status" value="1"/>
</dbReference>
<dbReference type="InterPro" id="IPR007295">
    <property type="entry name" value="DUF402"/>
</dbReference>
<dbReference type="InterPro" id="IPR035930">
    <property type="entry name" value="FomD-like_sf"/>
</dbReference>
<dbReference type="InterPro" id="IPR050212">
    <property type="entry name" value="Ntdp-like"/>
</dbReference>
<dbReference type="InterPro" id="IPR019307">
    <property type="entry name" value="RNA-bd_AU-1/RNase_E/G"/>
</dbReference>
<dbReference type="InterPro" id="IPR016730">
    <property type="entry name" value="RNA-bd_FAU-1"/>
</dbReference>
<dbReference type="PANTHER" id="PTHR39159">
    <property type="match status" value="1"/>
</dbReference>
<dbReference type="PANTHER" id="PTHR39159:SF1">
    <property type="entry name" value="UPF0374 PROTEIN YGAC"/>
    <property type="match status" value="1"/>
</dbReference>
<dbReference type="Pfam" id="PF04167">
    <property type="entry name" value="DUF402"/>
    <property type="match status" value="1"/>
</dbReference>
<dbReference type="Pfam" id="PF10150">
    <property type="entry name" value="RNase_E_G"/>
    <property type="match status" value="1"/>
</dbReference>
<dbReference type="PIRSF" id="PIRSF018644">
    <property type="entry name" value="RNA-binding_FAU-1"/>
    <property type="match status" value="1"/>
</dbReference>
<dbReference type="SUPFAM" id="SSF159234">
    <property type="entry name" value="FomD-like"/>
    <property type="match status" value="1"/>
</dbReference>
<comment type="function">
    <text evidence="1">Probable RNase involved in rRNA stability through maturation and/or degradation of precursor rRNAs. Binds to RNA in loop regions with AU-rich sequences.</text>
</comment>
<comment type="similarity">
    <text evidence="1">Belongs to the FAU-1 family.</text>
</comment>
<feature type="chain" id="PRO_1000216191" description="Probable ribonuclease FAU-1">
    <location>
        <begin position="1"/>
        <end position="471"/>
    </location>
</feature>
<reference key="1">
    <citation type="journal article" date="2007" name="Genome Biol.">
        <title>Genome analysis and genome-wide proteomics of Thermococcus gammatolerans, the most radioresistant organism known amongst the Archaea.</title>
        <authorList>
            <person name="Zivanovic Y."/>
            <person name="Armengaud J."/>
            <person name="Lagorce A."/>
            <person name="Leplat C."/>
            <person name="Guerin P."/>
            <person name="Dutertre M."/>
            <person name="Anthouard V."/>
            <person name="Forterre P."/>
            <person name="Wincker P."/>
            <person name="Confalonieri F."/>
        </authorList>
    </citation>
    <scope>NUCLEOTIDE SEQUENCE [LARGE SCALE GENOMIC DNA]</scope>
    <source>
        <strain>DSM 15229 / JCM 11827 / EJ3</strain>
    </source>
</reference>
<keyword id="KW-0255">Endonuclease</keyword>
<keyword id="KW-0378">Hydrolase</keyword>
<keyword id="KW-0540">Nuclease</keyword>
<keyword id="KW-1185">Reference proteome</keyword>
<keyword id="KW-0694">RNA-binding</keyword>
<keyword id="KW-0698">rRNA processing</keyword>
<proteinExistence type="inferred from homology"/>
<name>FAU1_THEGJ</name>
<gene>
    <name evidence="1" type="primary">fau-1</name>
    <name type="ordered locus">TGAM_2070</name>
</gene>
<sequence length="471" mass="54625">MSTDTGVSVRVRGIYSTALTKLFLDRGFRISQPSQKIAERLGIEKTYDEFDVDIYDKRDHHGVILVGTEVEKVKEVFEEEFIDVLFRKLPYQLYGIYKGLVIKRDERYVYVDIGNAIGTIPVEEGKNLHEGDEVLVQVKKHNLLPHLSTMLTIPGDYAVLIPKPVGVQRHVKISRKIRDSSERERLRILGLSIDMGEWGILWRTAAAYKDWNTLRDEIIRLSKIADRLKEAEKKSAPEQIVEGRNIYEVEFGGGAKKKLDEIRNRVVPTVEGHHMLKAYDVEFSFAVEIAEGILAKVPGQRIKVNQGFWEALLDSKGPKKGWLFFLEHNKPDGQRYKLGPGEIVEVTFNPLRITLRRNLKPGKFYDGLDLPIEFGDYAITEIEAGKWWFVHRYYDRNGNLKGEYYNINTPVEIYPDRARYIDLEIDIVKWPDGEKEIIDKDKLREHYEDGIISEKLYKAVLRITQEVYERI</sequence>
<evidence type="ECO:0000255" key="1">
    <source>
        <dbReference type="HAMAP-Rule" id="MF_01910"/>
    </source>
</evidence>